<dbReference type="EMBL" id="FO080169">
    <property type="protein sequence ID" value="CCD61752.1"/>
    <property type="molecule type" value="Genomic_DNA"/>
</dbReference>
<dbReference type="PIR" id="T15330">
    <property type="entry name" value="T15330"/>
</dbReference>
<dbReference type="RefSeq" id="NP_001294825.1">
    <property type="nucleotide sequence ID" value="NM_001307896.2"/>
</dbReference>
<dbReference type="FunCoup" id="Q10942">
    <property type="interactions" value="309"/>
</dbReference>
<dbReference type="IntAct" id="Q10942">
    <property type="interactions" value="1"/>
</dbReference>
<dbReference type="PaxDb" id="6239-B0310.6"/>
<dbReference type="EnsemblMetazoa" id="B0310.6.1">
    <property type="protein sequence ID" value="B0310.6.1"/>
    <property type="gene ID" value="WBGene00015142"/>
</dbReference>
<dbReference type="GeneID" id="24104124"/>
<dbReference type="KEGG" id="cel:CELE_B0310.6"/>
<dbReference type="UCSC" id="B0310.6">
    <property type="organism name" value="c. elegans"/>
</dbReference>
<dbReference type="AGR" id="WB:WBGene00015142"/>
<dbReference type="CTD" id="24104124"/>
<dbReference type="WormBase" id="B0310.6">
    <property type="protein sequence ID" value="CE03879"/>
    <property type="gene ID" value="WBGene00015142"/>
</dbReference>
<dbReference type="eggNOG" id="ENOG502TIBY">
    <property type="taxonomic scope" value="Eukaryota"/>
</dbReference>
<dbReference type="HOGENOM" id="CLU_2388313_0_0_1"/>
<dbReference type="InParanoid" id="Q10942"/>
<dbReference type="OMA" id="LFNMKAA"/>
<dbReference type="PRO" id="PR:Q10942"/>
<dbReference type="Proteomes" id="UP000001940">
    <property type="component" value="Chromosome X"/>
</dbReference>
<dbReference type="Bgee" id="WBGene00015142">
    <property type="expression patterns" value="Expressed in pharyngeal muscle cell (C elegans) and 3 other cell types or tissues"/>
</dbReference>
<name>YWS6_CAEEL</name>
<protein>
    <recommendedName>
        <fullName>Uncharacterized protein B0310.6</fullName>
    </recommendedName>
</protein>
<reference key="1">
    <citation type="journal article" date="1998" name="Science">
        <title>Genome sequence of the nematode C. elegans: a platform for investigating biology.</title>
        <authorList>
            <consortium name="The C. elegans sequencing consortium"/>
        </authorList>
    </citation>
    <scope>NUCLEOTIDE SEQUENCE [LARGE SCALE GENOMIC DNA]</scope>
    <source>
        <strain>Bristol N2</strain>
    </source>
</reference>
<proteinExistence type="predicted"/>
<gene>
    <name type="ORF">B0310.6</name>
</gene>
<keyword id="KW-1185">Reference proteome</keyword>
<keyword id="KW-0677">Repeat</keyword>
<accession>Q10942</accession>
<feature type="chain" id="PRO_0000065072" description="Uncharacterized protein B0310.6">
    <location>
        <begin position="1"/>
        <end position="95"/>
    </location>
</feature>
<feature type="repeat" description="1">
    <location>
        <begin position="67"/>
        <end position="74"/>
    </location>
</feature>
<feature type="repeat" description="2">
    <location>
        <begin position="85"/>
        <end position="92"/>
    </location>
</feature>
<feature type="region of interest" description="2 X 8 AA approximate repeats">
    <location>
        <begin position="67"/>
        <end position="92"/>
    </location>
</feature>
<sequence>MLRVVLFAAILVFSIANSEIIDKSLEQSGPIQDSSNFALAVNGEELPTDIALEGQSEVMIRAKRYYGCGCGCGCATVAAVSPVPCGGCCGCGYGK</sequence>
<organism>
    <name type="scientific">Caenorhabditis elegans</name>
    <dbReference type="NCBI Taxonomy" id="6239"/>
    <lineage>
        <taxon>Eukaryota</taxon>
        <taxon>Metazoa</taxon>
        <taxon>Ecdysozoa</taxon>
        <taxon>Nematoda</taxon>
        <taxon>Chromadorea</taxon>
        <taxon>Rhabditida</taxon>
        <taxon>Rhabditina</taxon>
        <taxon>Rhabditomorpha</taxon>
        <taxon>Rhabditoidea</taxon>
        <taxon>Rhabditidae</taxon>
        <taxon>Peloderinae</taxon>
        <taxon>Caenorhabditis</taxon>
    </lineage>
</organism>